<sequence length="71" mass="7569">MKLTCVVIVAVLLLTACQLITADDSRGTQKHRALRSDTKLSMSTRCKGTGKPCSRIAYNCCTGSCRSGKCG</sequence>
<comment type="function">
    <text evidence="1">Omega-conotoxins act at presynaptic membranes, they bind and block voltage-gated calcium channels (Cav).</text>
</comment>
<comment type="subcellular location">
    <subcellularLocation>
        <location evidence="4">Secreted</location>
    </subcellularLocation>
</comment>
<comment type="tissue specificity">
    <text evidence="7">Expressed by the venom duct.</text>
</comment>
<comment type="domain">
    <text evidence="2">The presence of a 'disulfide through disulfide knot' structurally defines this protein as a knottin.</text>
</comment>
<comment type="domain">
    <text evidence="6">The cysteine framework is VI/VII (C-C-CC-C-C).</text>
</comment>
<comment type="mass spectrometry" mass="2649.06" method="Electrospray" evidence="4">
    <molecule>Omega-conotoxin-like CnVIIE</molecule>
    <text>CnVIIE.</text>
</comment>
<comment type="mass spectrometry" mass="2575.052" method="Electrospray" evidence="4">
    <molecule>Omega-conotoxin-like CnVIIC</molecule>
    <text>CnVIIC.</text>
</comment>
<comment type="mass spectrometry" mass="2591.03" method="Electrospray" evidence="4">
    <molecule>Omega-conotoxin-like CnVIIC</molecule>
    <text>[Hyp7]-CnVIIC.</text>
</comment>
<comment type="miscellaneous">
    <text evidence="7">Found in injectable (milked) (IV) venom.</text>
</comment>
<comment type="similarity">
    <text evidence="6">Belongs to the conotoxin M superfamily.</text>
</comment>
<protein>
    <recommendedName>
        <fullName evidence="5">Omega-conotoxin-like CnVIIE</fullName>
    </recommendedName>
    <component>
        <recommendedName>
            <fullName evidence="5">Omega-conotoxin-like CnVIIC</fullName>
        </recommendedName>
        <alternativeName>
            <fullName>[Hyp7-CnVIIC]</fullName>
        </alternativeName>
    </component>
</protein>
<reference key="1">
    <citation type="journal article" date="2012" name="J. Proteomics">
        <title>Large-scale discovery of conopeptides and conoproteins in the injectable venom of a fish-hunting cone snail using a combined proteomic and transcriptomic approach.</title>
        <authorList>
            <person name="Violette A."/>
            <person name="Biass D."/>
            <person name="Dutertre S."/>
            <person name="Koua D."/>
            <person name="Piquemal D."/>
            <person name="Pierrat F."/>
            <person name="Stocklin R."/>
            <person name="Favreau P."/>
        </authorList>
    </citation>
    <scope>NUCLEOTIDE SEQUENCE [MRNA]</scope>
    <scope>HYDROXYLATION AT PRO-52</scope>
    <scope>AMIDATION AT CYS-70</scope>
    <scope>MASS SPECTROMETRY</scope>
    <scope>IDENTIFICATION BY MASS SPECTROMETRY</scope>
    <scope>SUBCELLULAR LOCATION</scope>
    <source>
        <tissue>Venom</tissue>
        <tissue>Venom duct</tissue>
    </source>
</reference>
<proteinExistence type="evidence at protein level"/>
<feature type="signal peptide" evidence="3">
    <location>
        <begin position="1"/>
        <end position="22"/>
    </location>
</feature>
<feature type="propeptide" id="PRO_0000451774" evidence="7">
    <location>
        <begin position="23"/>
        <end position="45"/>
    </location>
</feature>
<feature type="peptide" id="PRO_0000419883" description="Omega-conotoxin-like CnVIIE" evidence="4">
    <location>
        <begin position="46"/>
        <end position="71"/>
    </location>
</feature>
<feature type="peptide" id="PRO_0000419884" description="Omega-conotoxin-like CnVIIC" evidence="4">
    <location>
        <begin position="46"/>
        <end position="70"/>
    </location>
</feature>
<feature type="modified residue" description="4-hydroxyproline; partial" evidence="4">
    <location>
        <position position="52"/>
    </location>
</feature>
<feature type="modified residue" description="Cysteine amide" evidence="4">
    <location>
        <position position="70"/>
    </location>
</feature>
<feature type="disulfide bond" evidence="2">
    <location>
        <begin position="46"/>
        <end position="61"/>
    </location>
</feature>
<feature type="disulfide bond" evidence="2">
    <location>
        <begin position="53"/>
        <end position="65"/>
    </location>
</feature>
<feature type="disulfide bond" evidence="2">
    <location>
        <begin position="60"/>
        <end position="70"/>
    </location>
</feature>
<keyword id="KW-0027">Amidation</keyword>
<keyword id="KW-0108">Calcium channel impairing toxin</keyword>
<keyword id="KW-1015">Disulfide bond</keyword>
<keyword id="KW-0379">Hydroxylation</keyword>
<keyword id="KW-0872">Ion channel impairing toxin</keyword>
<keyword id="KW-0960">Knottin</keyword>
<keyword id="KW-0528">Neurotoxin</keyword>
<keyword id="KW-0964">Secreted</keyword>
<keyword id="KW-0732">Signal</keyword>
<keyword id="KW-0800">Toxin</keyword>
<keyword id="KW-1218">Voltage-gated calcium channel impairing toxin</keyword>
<name>M7E_CONCN</name>
<accession>P0DKQ3</accession>
<accession>S6CQC0</accession>
<dbReference type="EMBL" id="HE856385">
    <property type="protein sequence ID" value="CCI55498.1"/>
    <property type="molecule type" value="mRNA"/>
</dbReference>
<dbReference type="SMR" id="P0DKQ3"/>
<dbReference type="GO" id="GO:0005576">
    <property type="term" value="C:extracellular region"/>
    <property type="evidence" value="ECO:0007669"/>
    <property type="project" value="UniProtKB-SubCell"/>
</dbReference>
<dbReference type="GO" id="GO:0005246">
    <property type="term" value="F:calcium channel regulator activity"/>
    <property type="evidence" value="ECO:0007669"/>
    <property type="project" value="UniProtKB-KW"/>
</dbReference>
<dbReference type="GO" id="GO:0008200">
    <property type="term" value="F:ion channel inhibitor activity"/>
    <property type="evidence" value="ECO:0007669"/>
    <property type="project" value="InterPro"/>
</dbReference>
<dbReference type="GO" id="GO:0090729">
    <property type="term" value="F:toxin activity"/>
    <property type="evidence" value="ECO:0007669"/>
    <property type="project" value="UniProtKB-KW"/>
</dbReference>
<dbReference type="InterPro" id="IPR004214">
    <property type="entry name" value="Conotoxin"/>
</dbReference>
<dbReference type="InterPro" id="IPR012321">
    <property type="entry name" value="Conotoxin_omega-typ_CS"/>
</dbReference>
<dbReference type="Pfam" id="PF02950">
    <property type="entry name" value="Conotoxin"/>
    <property type="match status" value="1"/>
</dbReference>
<dbReference type="SUPFAM" id="SSF57059">
    <property type="entry name" value="omega toxin-like"/>
    <property type="match status" value="1"/>
</dbReference>
<dbReference type="PROSITE" id="PS60004">
    <property type="entry name" value="OMEGA_CONOTOXIN"/>
    <property type="match status" value="1"/>
</dbReference>
<organism>
    <name type="scientific">Conus consors</name>
    <name type="common">Singed cone</name>
    <dbReference type="NCBI Taxonomy" id="101297"/>
    <lineage>
        <taxon>Eukaryota</taxon>
        <taxon>Metazoa</taxon>
        <taxon>Spiralia</taxon>
        <taxon>Lophotrochozoa</taxon>
        <taxon>Mollusca</taxon>
        <taxon>Gastropoda</taxon>
        <taxon>Caenogastropoda</taxon>
        <taxon>Neogastropoda</taxon>
        <taxon>Conoidea</taxon>
        <taxon>Conidae</taxon>
        <taxon>Conus</taxon>
        <taxon>Pionoconus</taxon>
    </lineage>
</organism>
<evidence type="ECO:0000250" key="1"/>
<evidence type="ECO:0000250" key="2">
    <source>
        <dbReference type="UniProtKB" id="P05484"/>
    </source>
</evidence>
<evidence type="ECO:0000255" key="3"/>
<evidence type="ECO:0000269" key="4">
    <source>
    </source>
</evidence>
<evidence type="ECO:0000303" key="5">
    <source>
    </source>
</evidence>
<evidence type="ECO:0000305" key="6"/>
<evidence type="ECO:0000305" key="7">
    <source>
    </source>
</evidence>